<feature type="chain" id="PRO_0000450253" description="Protein SOB FIVE-LIKE 5">
    <location>
        <begin position="1"/>
        <end position="170"/>
    </location>
</feature>
<feature type="region of interest" description="Disordered" evidence="4">
    <location>
        <begin position="17"/>
        <end position="78"/>
    </location>
</feature>
<feature type="short sequence motif" description="SOFL-A" evidence="8">
    <location>
        <begin position="10"/>
        <end position="15"/>
    </location>
</feature>
<feature type="short sequence motif" description="SOFL-B" evidence="8">
    <location>
        <begin position="61"/>
        <end position="70"/>
    </location>
</feature>
<feature type="short sequence motif" description="Nuclear localization signal" evidence="3">
    <location>
        <begin position="79"/>
        <end position="86"/>
    </location>
</feature>
<feature type="compositionally biased region" description="Basic and acidic residues" evidence="4">
    <location>
        <begin position="35"/>
        <end position="44"/>
    </location>
</feature>
<accession>Q8L9K4</accession>
<accession>O81896</accession>
<keyword id="KW-0203">Cytokinin biosynthesis</keyword>
<keyword id="KW-0932">Cytokinin signaling pathway</keyword>
<keyword id="KW-0963">Cytoplasm</keyword>
<keyword id="KW-0539">Nucleus</keyword>
<keyword id="KW-1185">Reference proteome</keyword>
<reference key="1">
    <citation type="journal article" date="1999" name="Nature">
        <title>Sequence and analysis of chromosome 4 of the plant Arabidopsis thaliana.</title>
        <authorList>
            <person name="Mayer K.F.X."/>
            <person name="Schueller C."/>
            <person name="Wambutt R."/>
            <person name="Murphy G."/>
            <person name="Volckaert G."/>
            <person name="Pohl T."/>
            <person name="Duesterhoeft A."/>
            <person name="Stiekema W."/>
            <person name="Entian K.-D."/>
            <person name="Terryn N."/>
            <person name="Harris B."/>
            <person name="Ansorge W."/>
            <person name="Brandt P."/>
            <person name="Grivell L.A."/>
            <person name="Rieger M."/>
            <person name="Weichselgartner M."/>
            <person name="de Simone V."/>
            <person name="Obermaier B."/>
            <person name="Mache R."/>
            <person name="Mueller M."/>
            <person name="Kreis M."/>
            <person name="Delseny M."/>
            <person name="Puigdomenech P."/>
            <person name="Watson M."/>
            <person name="Schmidtheini T."/>
            <person name="Reichert B."/>
            <person name="Portetelle D."/>
            <person name="Perez-Alonso M."/>
            <person name="Boutry M."/>
            <person name="Bancroft I."/>
            <person name="Vos P."/>
            <person name="Hoheisel J."/>
            <person name="Zimmermann W."/>
            <person name="Wedler H."/>
            <person name="Ridley P."/>
            <person name="Langham S.-A."/>
            <person name="McCullagh B."/>
            <person name="Bilham L."/>
            <person name="Robben J."/>
            <person name="van der Schueren J."/>
            <person name="Grymonprez B."/>
            <person name="Chuang Y.-J."/>
            <person name="Vandenbussche F."/>
            <person name="Braeken M."/>
            <person name="Weltjens I."/>
            <person name="Voet M."/>
            <person name="Bastiaens I."/>
            <person name="Aert R."/>
            <person name="Defoor E."/>
            <person name="Weitzenegger T."/>
            <person name="Bothe G."/>
            <person name="Ramsperger U."/>
            <person name="Hilbert H."/>
            <person name="Braun M."/>
            <person name="Holzer E."/>
            <person name="Brandt A."/>
            <person name="Peters S."/>
            <person name="van Staveren M."/>
            <person name="Dirkse W."/>
            <person name="Mooijman P."/>
            <person name="Klein Lankhorst R."/>
            <person name="Rose M."/>
            <person name="Hauf J."/>
            <person name="Koetter P."/>
            <person name="Berneiser S."/>
            <person name="Hempel S."/>
            <person name="Feldpausch M."/>
            <person name="Lamberth S."/>
            <person name="Van den Daele H."/>
            <person name="De Keyser A."/>
            <person name="Buysshaert C."/>
            <person name="Gielen J."/>
            <person name="Villarroel R."/>
            <person name="De Clercq R."/>
            <person name="van Montagu M."/>
            <person name="Rogers J."/>
            <person name="Cronin A."/>
            <person name="Quail M.A."/>
            <person name="Bray-Allen S."/>
            <person name="Clark L."/>
            <person name="Doggett J."/>
            <person name="Hall S."/>
            <person name="Kay M."/>
            <person name="Lennard N."/>
            <person name="McLay K."/>
            <person name="Mayes R."/>
            <person name="Pettett A."/>
            <person name="Rajandream M.A."/>
            <person name="Lyne M."/>
            <person name="Benes V."/>
            <person name="Rechmann S."/>
            <person name="Borkova D."/>
            <person name="Bloecker H."/>
            <person name="Scharfe M."/>
            <person name="Grimm M."/>
            <person name="Loehnert T.-H."/>
            <person name="Dose S."/>
            <person name="de Haan M."/>
            <person name="Maarse A.C."/>
            <person name="Schaefer M."/>
            <person name="Mueller-Auer S."/>
            <person name="Gabel C."/>
            <person name="Fuchs M."/>
            <person name="Fartmann B."/>
            <person name="Granderath K."/>
            <person name="Dauner D."/>
            <person name="Herzl A."/>
            <person name="Neumann S."/>
            <person name="Argiriou A."/>
            <person name="Vitale D."/>
            <person name="Liguori R."/>
            <person name="Piravandi E."/>
            <person name="Massenet O."/>
            <person name="Quigley F."/>
            <person name="Clabauld G."/>
            <person name="Muendlein A."/>
            <person name="Felber R."/>
            <person name="Schnabl S."/>
            <person name="Hiller R."/>
            <person name="Schmidt W."/>
            <person name="Lecharny A."/>
            <person name="Aubourg S."/>
            <person name="Chefdor F."/>
            <person name="Cooke R."/>
            <person name="Berger C."/>
            <person name="Monfort A."/>
            <person name="Casacuberta E."/>
            <person name="Gibbons T."/>
            <person name="Weber N."/>
            <person name="Vandenbol M."/>
            <person name="Bargues M."/>
            <person name="Terol J."/>
            <person name="Torres A."/>
            <person name="Perez-Perez A."/>
            <person name="Purnelle B."/>
            <person name="Bent E."/>
            <person name="Johnson S."/>
            <person name="Tacon D."/>
            <person name="Jesse T."/>
            <person name="Heijnen L."/>
            <person name="Schwarz S."/>
            <person name="Scholler P."/>
            <person name="Heber S."/>
            <person name="Francs P."/>
            <person name="Bielke C."/>
            <person name="Frishman D."/>
            <person name="Haase D."/>
            <person name="Lemcke K."/>
            <person name="Mewes H.-W."/>
            <person name="Stocker S."/>
            <person name="Zaccaria P."/>
            <person name="Bevan M."/>
            <person name="Wilson R.K."/>
            <person name="de la Bastide M."/>
            <person name="Habermann K."/>
            <person name="Parnell L."/>
            <person name="Dedhia N."/>
            <person name="Gnoj L."/>
            <person name="Schutz K."/>
            <person name="Huang E."/>
            <person name="Spiegel L."/>
            <person name="Sekhon M."/>
            <person name="Murray J."/>
            <person name="Sheet P."/>
            <person name="Cordes M."/>
            <person name="Abu-Threideh J."/>
            <person name="Stoneking T."/>
            <person name="Kalicki J."/>
            <person name="Graves T."/>
            <person name="Harmon G."/>
            <person name="Edwards J."/>
            <person name="Latreille P."/>
            <person name="Courtney L."/>
            <person name="Cloud J."/>
            <person name="Abbott A."/>
            <person name="Scott K."/>
            <person name="Johnson D."/>
            <person name="Minx P."/>
            <person name="Bentley D."/>
            <person name="Fulton B."/>
            <person name="Miller N."/>
            <person name="Greco T."/>
            <person name="Kemp K."/>
            <person name="Kramer J."/>
            <person name="Fulton L."/>
            <person name="Mardis E."/>
            <person name="Dante M."/>
            <person name="Pepin K."/>
            <person name="Hillier L.W."/>
            <person name="Nelson J."/>
            <person name="Spieth J."/>
            <person name="Ryan E."/>
            <person name="Andrews S."/>
            <person name="Geisel C."/>
            <person name="Layman D."/>
            <person name="Du H."/>
            <person name="Ali J."/>
            <person name="Berghoff A."/>
            <person name="Jones K."/>
            <person name="Drone K."/>
            <person name="Cotton M."/>
            <person name="Joshu C."/>
            <person name="Antonoiu B."/>
            <person name="Zidanic M."/>
            <person name="Strong C."/>
            <person name="Sun H."/>
            <person name="Lamar B."/>
            <person name="Yordan C."/>
            <person name="Ma P."/>
            <person name="Zhong J."/>
            <person name="Preston R."/>
            <person name="Vil D."/>
            <person name="Shekher M."/>
            <person name="Matero A."/>
            <person name="Shah R."/>
            <person name="Swaby I.K."/>
            <person name="O'Shaughnessy A."/>
            <person name="Rodriguez M."/>
            <person name="Hoffman J."/>
            <person name="Till S."/>
            <person name="Granat S."/>
            <person name="Shohdy N."/>
            <person name="Hasegawa A."/>
            <person name="Hameed A."/>
            <person name="Lodhi M."/>
            <person name="Johnson A."/>
            <person name="Chen E."/>
            <person name="Marra M.A."/>
            <person name="Martienssen R."/>
            <person name="McCombie W.R."/>
        </authorList>
    </citation>
    <scope>NUCLEOTIDE SEQUENCE [LARGE SCALE GENOMIC DNA]</scope>
    <source>
        <strain>cv. Columbia</strain>
    </source>
</reference>
<reference key="2">
    <citation type="journal article" date="2017" name="Plant J.">
        <title>Araport11: a complete reannotation of the Arabidopsis thaliana reference genome.</title>
        <authorList>
            <person name="Cheng C.Y."/>
            <person name="Krishnakumar V."/>
            <person name="Chan A.P."/>
            <person name="Thibaud-Nissen F."/>
            <person name="Schobel S."/>
            <person name="Town C.D."/>
        </authorList>
    </citation>
    <scope>GENOME REANNOTATION</scope>
    <source>
        <strain>cv. Columbia</strain>
    </source>
</reference>
<reference key="3">
    <citation type="submission" date="2006-06" db="EMBL/GenBank/DDBJ databases">
        <title>Arabidopsis ORF clones.</title>
        <authorList>
            <person name="Kim C.J."/>
            <person name="Chen H."/>
            <person name="Quinitio C."/>
            <person name="Shinn P."/>
            <person name="Ecker J.R."/>
        </authorList>
    </citation>
    <scope>NUCLEOTIDE SEQUENCE [LARGE SCALE MRNA]</scope>
    <source>
        <strain>cv. Columbia</strain>
    </source>
</reference>
<reference key="4">
    <citation type="submission" date="2002-03" db="EMBL/GenBank/DDBJ databases">
        <title>Full-length cDNA from Arabidopsis thaliana.</title>
        <authorList>
            <person name="Brover V.V."/>
            <person name="Troukhan M.E."/>
            <person name="Alexandrov N.A."/>
            <person name="Lu Y.-P."/>
            <person name="Flavell R.B."/>
            <person name="Feldmann K.A."/>
        </authorList>
    </citation>
    <scope>NUCLEOTIDE SEQUENCE [LARGE SCALE MRNA]</scope>
</reference>
<reference key="5">
    <citation type="journal article" date="2018" name="G3 (Bethesda)">
        <title>Synopsis of the SOFL plant-specific gene family.</title>
        <authorList>
            <person name="Tayengwa R."/>
            <person name="Zhao J."/>
            <person name="Pierce C.F."/>
            <person name="Werner B.E."/>
            <person name="Neff M.M."/>
        </authorList>
    </citation>
    <scope>TISSUE SPECIFICITY</scope>
    <scope>GENE FAMILY</scope>
    <scope>NOMENCLATURE</scope>
    <source>
        <strain>cv. Columbia</strain>
    </source>
</reference>
<protein>
    <recommendedName>
        <fullName evidence="6">Protein SOB FIVE-LIKE 5</fullName>
        <shortName evidence="6">AtSOFL5</shortName>
    </recommendedName>
</protein>
<dbReference type="EMBL" id="AL031394">
    <property type="protein sequence ID" value="CAA20593.1"/>
    <property type="status" value="ALT_SEQ"/>
    <property type="molecule type" value="Genomic_DNA"/>
</dbReference>
<dbReference type="EMBL" id="AL161584">
    <property type="protein sequence ID" value="CAB80097.1"/>
    <property type="status" value="ALT_SEQ"/>
    <property type="molecule type" value="Genomic_DNA"/>
</dbReference>
<dbReference type="EMBL" id="CP002687">
    <property type="protein sequence ID" value="AEE86279.1"/>
    <property type="molecule type" value="Genomic_DNA"/>
</dbReference>
<dbReference type="EMBL" id="CP002687">
    <property type="protein sequence ID" value="ANM66730.1"/>
    <property type="molecule type" value="Genomic_DNA"/>
</dbReference>
<dbReference type="EMBL" id="BT025736">
    <property type="protein sequence ID" value="ABF83626.1"/>
    <property type="molecule type" value="mRNA"/>
</dbReference>
<dbReference type="EMBL" id="AY088383">
    <property type="protein sequence ID" value="AAM65921.1"/>
    <property type="molecule type" value="mRNA"/>
</dbReference>
<dbReference type="PIR" id="T04997">
    <property type="entry name" value="T04997"/>
</dbReference>
<dbReference type="RefSeq" id="NP_001328608.1">
    <property type="nucleotide sequence ID" value="NM_001342234.1"/>
</dbReference>
<dbReference type="RefSeq" id="NP_567937.1">
    <property type="nucleotide sequence ID" value="NM_119538.7"/>
</dbReference>
<dbReference type="FunCoup" id="Q8L9K4">
    <property type="interactions" value="79"/>
</dbReference>
<dbReference type="STRING" id="3702.Q8L9K4"/>
<dbReference type="PaxDb" id="3702-AT4G33800.1"/>
<dbReference type="EnsemblPlants" id="AT4G33800.1">
    <property type="protein sequence ID" value="AT4G33800.1"/>
    <property type="gene ID" value="AT4G33800"/>
</dbReference>
<dbReference type="EnsemblPlants" id="AT4G33800.2">
    <property type="protein sequence ID" value="AT4G33800.2"/>
    <property type="gene ID" value="AT4G33800"/>
</dbReference>
<dbReference type="GeneID" id="829522"/>
<dbReference type="Gramene" id="AT4G33800.1">
    <property type="protein sequence ID" value="AT4G33800.1"/>
    <property type="gene ID" value="AT4G33800"/>
</dbReference>
<dbReference type="Gramene" id="AT4G33800.2">
    <property type="protein sequence ID" value="AT4G33800.2"/>
    <property type="gene ID" value="AT4G33800"/>
</dbReference>
<dbReference type="KEGG" id="ath:AT4G33800"/>
<dbReference type="Araport" id="AT4G33800"/>
<dbReference type="TAIR" id="AT4G33800"/>
<dbReference type="eggNOG" id="ENOG502S0VS">
    <property type="taxonomic scope" value="Eukaryota"/>
</dbReference>
<dbReference type="HOGENOM" id="CLU_082551_1_0_1"/>
<dbReference type="InParanoid" id="Q8L9K4"/>
<dbReference type="OMA" id="GLKKQCK"/>
<dbReference type="PhylomeDB" id="Q8L9K4"/>
<dbReference type="PRO" id="PR:Q8L9K4"/>
<dbReference type="Proteomes" id="UP000006548">
    <property type="component" value="Chromosome 4"/>
</dbReference>
<dbReference type="ExpressionAtlas" id="Q8L9K4">
    <property type="expression patterns" value="baseline and differential"/>
</dbReference>
<dbReference type="GO" id="GO:0005737">
    <property type="term" value="C:cytoplasm"/>
    <property type="evidence" value="ECO:0000250"/>
    <property type="project" value="UniProtKB"/>
</dbReference>
<dbReference type="GO" id="GO:0005634">
    <property type="term" value="C:nucleus"/>
    <property type="evidence" value="ECO:0000250"/>
    <property type="project" value="UniProtKB"/>
</dbReference>
<dbReference type="GO" id="GO:0009691">
    <property type="term" value="P:cytokinin biosynthetic process"/>
    <property type="evidence" value="ECO:0007669"/>
    <property type="project" value="UniProtKB-KW"/>
</dbReference>
<dbReference type="GO" id="GO:0009690">
    <property type="term" value="P:cytokinin metabolic process"/>
    <property type="evidence" value="ECO:0000250"/>
    <property type="project" value="UniProtKB"/>
</dbReference>
<dbReference type="GO" id="GO:0009736">
    <property type="term" value="P:cytokinin-activated signaling pathway"/>
    <property type="evidence" value="ECO:0000250"/>
    <property type="project" value="UniProtKB"/>
</dbReference>
<dbReference type="InterPro" id="IPR044670">
    <property type="entry name" value="SOFL"/>
</dbReference>
<dbReference type="PANTHER" id="PTHR33347">
    <property type="entry name" value="OSJNBA0091C07.3 PROTEIN"/>
    <property type="match status" value="1"/>
</dbReference>
<dbReference type="PANTHER" id="PTHR33347:SF1">
    <property type="entry name" value="PROTEIN SOB FIVE-LIKE 5"/>
    <property type="match status" value="1"/>
</dbReference>
<proteinExistence type="evidence at transcript level"/>
<gene>
    <name evidence="6" type="primary">SOFL5</name>
    <name evidence="9" type="ordered locus">At4g33800</name>
    <name evidence="10" type="ORF">T16L1.290</name>
</gene>
<evidence type="ECO:0000250" key="1">
    <source>
        <dbReference type="UniProtKB" id="Q67YG7"/>
    </source>
</evidence>
<evidence type="ECO:0000250" key="2">
    <source>
        <dbReference type="UniProtKB" id="Q9CA45"/>
    </source>
</evidence>
<evidence type="ECO:0000255" key="3">
    <source>
        <dbReference type="PROSITE-ProRule" id="PRU00768"/>
    </source>
</evidence>
<evidence type="ECO:0000256" key="4">
    <source>
        <dbReference type="SAM" id="MobiDB-lite"/>
    </source>
</evidence>
<evidence type="ECO:0000269" key="5">
    <source>
    </source>
</evidence>
<evidence type="ECO:0000303" key="6">
    <source>
    </source>
</evidence>
<evidence type="ECO:0000305" key="7"/>
<evidence type="ECO:0000305" key="8">
    <source>
    </source>
</evidence>
<evidence type="ECO:0000312" key="9">
    <source>
        <dbReference type="Araport" id="AT4G33800"/>
    </source>
</evidence>
<evidence type="ECO:0000312" key="10">
    <source>
        <dbReference type="EMBL" id="CAA20593.1"/>
    </source>
</evidence>
<organism>
    <name type="scientific">Arabidopsis thaliana</name>
    <name type="common">Mouse-ear cress</name>
    <dbReference type="NCBI Taxonomy" id="3702"/>
    <lineage>
        <taxon>Eukaryota</taxon>
        <taxon>Viridiplantae</taxon>
        <taxon>Streptophyta</taxon>
        <taxon>Embryophyta</taxon>
        <taxon>Tracheophyta</taxon>
        <taxon>Spermatophyta</taxon>
        <taxon>Magnoliopsida</taxon>
        <taxon>eudicotyledons</taxon>
        <taxon>Gunneridae</taxon>
        <taxon>Pentapetalae</taxon>
        <taxon>rosids</taxon>
        <taxon>malvids</taxon>
        <taxon>Brassicales</taxon>
        <taxon>Brassicaceae</taxon>
        <taxon>Camelineae</taxon>
        <taxon>Arabidopsis</taxon>
    </lineage>
</organism>
<name>SOFL5_ARATH</name>
<sequence length="170" mass="19426">MLGSSSGCESGWTLYLDQSVSSPSPSCFRDSNGFDSRRRSKDSWDQNYVHQEEEEEEDDLSMISDASSGPRNISEEDSVKKINIVGLKKQCKREKKRRDYEKMNSLLDDTASSPLFNFPHMLQKSVGGNKIEQTFPESTLDYSQGFSATQFQDKTAFQEQCGYLHMETRF</sequence>
<comment type="function">
    <text evidence="1">Involved in cytokinin-mediated development.</text>
</comment>
<comment type="subcellular location">
    <subcellularLocation>
        <location evidence="1">Cytoplasm</location>
    </subcellularLocation>
    <subcellularLocation>
        <location evidence="3">Nucleus</location>
    </subcellularLocation>
</comment>
<comment type="tissue specificity">
    <text evidence="5">Expressed in seedlings, roots, flowers and siliques (PubMed:29467189). Barely detectable in leaves (PubMed:29467189).</text>
</comment>
<comment type="domain">
    <text evidence="2">Domains SOFL-A and SOFL-B are required for function in cytokinin-mediated development.</text>
</comment>
<comment type="similarity">
    <text evidence="7">Belongs to the SOFL plant protein family.</text>
</comment>
<comment type="sequence caution" evidence="7">
    <conflict type="erroneous gene model prediction">
        <sequence resource="EMBL-CDS" id="CAA20593"/>
    </conflict>
</comment>
<comment type="sequence caution" evidence="7">
    <conflict type="erroneous gene model prediction">
        <sequence resource="EMBL-CDS" id="CAB80097"/>
    </conflict>
</comment>